<organism>
    <name type="scientific">Danio rerio</name>
    <name type="common">Zebrafish</name>
    <name type="synonym">Brachydanio rerio</name>
    <dbReference type="NCBI Taxonomy" id="7955"/>
    <lineage>
        <taxon>Eukaryota</taxon>
        <taxon>Metazoa</taxon>
        <taxon>Chordata</taxon>
        <taxon>Craniata</taxon>
        <taxon>Vertebrata</taxon>
        <taxon>Euteleostomi</taxon>
        <taxon>Actinopterygii</taxon>
        <taxon>Neopterygii</taxon>
        <taxon>Teleostei</taxon>
        <taxon>Ostariophysi</taxon>
        <taxon>Cypriniformes</taxon>
        <taxon>Danionidae</taxon>
        <taxon>Danioninae</taxon>
        <taxon>Danio</taxon>
    </lineage>
</organism>
<comment type="function">
    <text evidence="1">Recognizes and hydrolyzes the peptide bond at the C-terminal Gly of ubiquitin. Involved in the processing of poly-ubiquitin precursors as well as that of ubiquitinated proteins.</text>
</comment>
<comment type="catalytic activity">
    <reaction evidence="1">
        <text>Thiol-dependent hydrolysis of ester, thioester, amide, peptide and isopeptide bonds formed by the C-terminal Gly of ubiquitin (a 76-residue protein attached to proteins as an intracellular targeting signal).</text>
        <dbReference type="EC" id="3.4.19.12"/>
    </reaction>
</comment>
<comment type="subcellular location">
    <subcellularLocation>
        <location evidence="1">Cytoplasm</location>
    </subcellularLocation>
    <subcellularLocation>
        <location evidence="1">Nucleus</location>
    </subcellularLocation>
</comment>
<comment type="disruption phenotype">
    <text evidence="6">At 5 dpf, knockdown results in significantly reduced auditory startle response to white noise at 600 and 800 Hz. Mutants have less developed vestibuloacoustic neurons innervating the ear bases, less organized and fewer statoacoustic neurons, show a significant delay in the development of primary motor neurons and are smaller than the wild-type counterpart.</text>
</comment>
<comment type="similarity">
    <text evidence="7">Belongs to the peptidase C19 family.</text>
</comment>
<proteinExistence type="inferred from homology"/>
<evidence type="ECO:0000250" key="1">
    <source>
        <dbReference type="UniProtKB" id="Q86UV5"/>
    </source>
</evidence>
<evidence type="ECO:0000255" key="2">
    <source>
        <dbReference type="PROSITE-ProRule" id="PRU00214"/>
    </source>
</evidence>
<evidence type="ECO:0000255" key="3">
    <source>
        <dbReference type="PROSITE-ProRule" id="PRU00613"/>
    </source>
</evidence>
<evidence type="ECO:0000255" key="4">
    <source>
        <dbReference type="PROSITE-ProRule" id="PRU01035"/>
    </source>
</evidence>
<evidence type="ECO:0000256" key="5">
    <source>
        <dbReference type="SAM" id="MobiDB-lite"/>
    </source>
</evidence>
<evidence type="ECO:0000269" key="6">
    <source>
    </source>
</evidence>
<evidence type="ECO:0000305" key="7"/>
<gene>
    <name type="primary">usp48</name>
</gene>
<keyword id="KW-0963">Cytoplasm</keyword>
<keyword id="KW-0378">Hydrolase</keyword>
<keyword id="KW-0539">Nucleus</keyword>
<keyword id="KW-0645">Protease</keyword>
<keyword id="KW-1185">Reference proteome</keyword>
<keyword id="KW-0677">Repeat</keyword>
<keyword id="KW-0788">Thiol protease</keyword>
<keyword id="KW-0833">Ubl conjugation pathway</keyword>
<accession>A0A0R4IB93</accession>
<accession>A0A8M2BK68</accession>
<feature type="chain" id="PRO_0000458057" description="Ubiquitin carboxyl-terminal hydrolase 48">
    <location>
        <begin position="1"/>
        <end position="1047"/>
    </location>
</feature>
<feature type="domain" description="USP" evidence="4">
    <location>
        <begin position="89"/>
        <end position="416"/>
    </location>
</feature>
<feature type="domain" description="DUSP 1" evidence="3">
    <location>
        <begin position="457"/>
        <end position="551"/>
    </location>
</feature>
<feature type="domain" description="DUSP 2" evidence="3">
    <location>
        <begin position="567"/>
        <end position="697"/>
    </location>
</feature>
<feature type="domain" description="DUSP 3" evidence="3">
    <location>
        <begin position="717"/>
        <end position="830"/>
    </location>
</feature>
<feature type="domain" description="Ubiquitin-like" evidence="2">
    <location>
        <begin position="961"/>
        <end position="1012"/>
    </location>
</feature>
<feature type="region of interest" description="Disordered" evidence="5">
    <location>
        <begin position="609"/>
        <end position="647"/>
    </location>
</feature>
<feature type="region of interest" description="Disordered" evidence="5">
    <location>
        <begin position="887"/>
        <end position="928"/>
    </location>
</feature>
<feature type="compositionally biased region" description="Polar residues" evidence="5">
    <location>
        <begin position="621"/>
        <end position="631"/>
    </location>
</feature>
<feature type="compositionally biased region" description="Basic and acidic residues" evidence="5">
    <location>
        <begin position="635"/>
        <end position="647"/>
    </location>
</feature>
<feature type="compositionally biased region" description="Basic and acidic residues" evidence="5">
    <location>
        <begin position="901"/>
        <end position="912"/>
    </location>
</feature>
<feature type="active site" description="Nucleophile" evidence="4">
    <location>
        <position position="98"/>
    </location>
</feature>
<feature type="active site" description="Proton acceptor" evidence="4">
    <location>
        <position position="348"/>
    </location>
</feature>
<reference key="1">
    <citation type="journal article" date="2013" name="Nature">
        <title>The zebrafish reference genome sequence and its relationship to the human genome.</title>
        <authorList>
            <person name="Howe K."/>
            <person name="Clark M.D."/>
            <person name="Torroja C.F."/>
            <person name="Torrance J."/>
            <person name="Berthelot C."/>
            <person name="Muffato M."/>
            <person name="Collins J.E."/>
            <person name="Humphray S."/>
            <person name="McLaren K."/>
            <person name="Matthews L."/>
            <person name="McLaren S."/>
            <person name="Sealy I."/>
            <person name="Caccamo M."/>
            <person name="Churcher C."/>
            <person name="Scott C."/>
            <person name="Barrett J.C."/>
            <person name="Koch R."/>
            <person name="Rauch G.J."/>
            <person name="White S."/>
            <person name="Chow W."/>
            <person name="Kilian B."/>
            <person name="Quintais L.T."/>
            <person name="Guerra-Assuncao J.A."/>
            <person name="Zhou Y."/>
            <person name="Gu Y."/>
            <person name="Yen J."/>
            <person name="Vogel J.H."/>
            <person name="Eyre T."/>
            <person name="Redmond S."/>
            <person name="Banerjee R."/>
            <person name="Chi J."/>
            <person name="Fu B."/>
            <person name="Langley E."/>
            <person name="Maguire S.F."/>
            <person name="Laird G.K."/>
            <person name="Lloyd D."/>
            <person name="Kenyon E."/>
            <person name="Donaldson S."/>
            <person name="Sehra H."/>
            <person name="Almeida-King J."/>
            <person name="Loveland J."/>
            <person name="Trevanion S."/>
            <person name="Jones M."/>
            <person name="Quail M."/>
            <person name="Willey D."/>
            <person name="Hunt A."/>
            <person name="Burton J."/>
            <person name="Sims S."/>
            <person name="McLay K."/>
            <person name="Plumb B."/>
            <person name="Davis J."/>
            <person name="Clee C."/>
            <person name="Oliver K."/>
            <person name="Clark R."/>
            <person name="Riddle C."/>
            <person name="Elliot D."/>
            <person name="Threadgold G."/>
            <person name="Harden G."/>
            <person name="Ware D."/>
            <person name="Begum S."/>
            <person name="Mortimore B."/>
            <person name="Kerry G."/>
            <person name="Heath P."/>
            <person name="Phillimore B."/>
            <person name="Tracey A."/>
            <person name="Corby N."/>
            <person name="Dunn M."/>
            <person name="Johnson C."/>
            <person name="Wood J."/>
            <person name="Clark S."/>
            <person name="Pelan S."/>
            <person name="Griffiths G."/>
            <person name="Smith M."/>
            <person name="Glithero R."/>
            <person name="Howden P."/>
            <person name="Barker N."/>
            <person name="Lloyd C."/>
            <person name="Stevens C."/>
            <person name="Harley J."/>
            <person name="Holt K."/>
            <person name="Panagiotidis G."/>
            <person name="Lovell J."/>
            <person name="Beasley H."/>
            <person name="Henderson C."/>
            <person name="Gordon D."/>
            <person name="Auger K."/>
            <person name="Wright D."/>
            <person name="Collins J."/>
            <person name="Raisen C."/>
            <person name="Dyer L."/>
            <person name="Leung K."/>
            <person name="Robertson L."/>
            <person name="Ambridge K."/>
            <person name="Leongamornlert D."/>
            <person name="McGuire S."/>
            <person name="Gilderthorp R."/>
            <person name="Griffiths C."/>
            <person name="Manthravadi D."/>
            <person name="Nichol S."/>
            <person name="Barker G."/>
            <person name="Whitehead S."/>
            <person name="Kay M."/>
            <person name="Brown J."/>
            <person name="Murnane C."/>
            <person name="Gray E."/>
            <person name="Humphries M."/>
            <person name="Sycamore N."/>
            <person name="Barker D."/>
            <person name="Saunders D."/>
            <person name="Wallis J."/>
            <person name="Babbage A."/>
            <person name="Hammond S."/>
            <person name="Mashreghi-Mohammadi M."/>
            <person name="Barr L."/>
            <person name="Martin S."/>
            <person name="Wray P."/>
            <person name="Ellington A."/>
            <person name="Matthews N."/>
            <person name="Ellwood M."/>
            <person name="Woodmansey R."/>
            <person name="Clark G."/>
            <person name="Cooper J."/>
            <person name="Tromans A."/>
            <person name="Grafham D."/>
            <person name="Skuce C."/>
            <person name="Pandian R."/>
            <person name="Andrews R."/>
            <person name="Harrison E."/>
            <person name="Kimberley A."/>
            <person name="Garnett J."/>
            <person name="Fosker N."/>
            <person name="Hall R."/>
            <person name="Garner P."/>
            <person name="Kelly D."/>
            <person name="Bird C."/>
            <person name="Palmer S."/>
            <person name="Gehring I."/>
            <person name="Berger A."/>
            <person name="Dooley C.M."/>
            <person name="Ersan-Urun Z."/>
            <person name="Eser C."/>
            <person name="Geiger H."/>
            <person name="Geisler M."/>
            <person name="Karotki L."/>
            <person name="Kirn A."/>
            <person name="Konantz J."/>
            <person name="Konantz M."/>
            <person name="Oberlander M."/>
            <person name="Rudolph-Geiger S."/>
            <person name="Teucke M."/>
            <person name="Lanz C."/>
            <person name="Raddatz G."/>
            <person name="Osoegawa K."/>
            <person name="Zhu B."/>
            <person name="Rapp A."/>
            <person name="Widaa S."/>
            <person name="Langford C."/>
            <person name="Yang F."/>
            <person name="Schuster S.C."/>
            <person name="Carter N.P."/>
            <person name="Harrow J."/>
            <person name="Ning Z."/>
            <person name="Herrero J."/>
            <person name="Searle S.M."/>
            <person name="Enright A."/>
            <person name="Geisler R."/>
            <person name="Plasterk R.H."/>
            <person name="Lee C."/>
            <person name="Westerfield M."/>
            <person name="de Jong P.J."/>
            <person name="Zon L.I."/>
            <person name="Postlethwait J.H."/>
            <person name="Nusslein-Volhard C."/>
            <person name="Hubbard T.J."/>
            <person name="Roest Crollius H."/>
            <person name="Rogers J."/>
            <person name="Stemple D.L."/>
        </authorList>
    </citation>
    <scope>NUCLEOTIDE SEQUENCE [LARGE SCALE GENOMIC DNA]</scope>
    <source>
        <strain>Tuebingen</strain>
    </source>
</reference>
<reference key="2">
    <citation type="journal article" date="2021" name="Hum. Mol. Genet.">
        <title>Variants in USP48 encoding ubiquitin hydrolase are associated with autosomal dominant non-syndromic hereditary hearing loss.</title>
        <authorList>
            <person name="Bassani S."/>
            <person name="van Beelen E."/>
            <person name="Rossel M."/>
            <person name="Voisin N."/>
            <person name="Morgan A."/>
            <person name="Arribat Y."/>
            <person name="Chatron N."/>
            <person name="Chrast J."/>
            <person name="Cocca M."/>
            <person name="Delprat B."/>
            <person name="Faletra F."/>
            <person name="Giannuzzi G."/>
            <person name="Guex N."/>
            <person name="Machavoine R."/>
            <person name="Pradervand S."/>
            <person name="Smits J.J."/>
            <person name="van de Kamp J.M."/>
            <person name="Ziegler A."/>
            <person name="Amati F."/>
            <person name="Marlin S."/>
            <person name="Kremer H."/>
            <person name="Locher H."/>
            <person name="Maurice T."/>
            <person name="Gasparini P."/>
            <person name="Girotto G."/>
            <person name="Reymond A."/>
        </authorList>
    </citation>
    <scope>DISRUPTION PHENOTYPE</scope>
</reference>
<sequence>MAPRLQLEKAAWRWAEAVRPEDITHEHIELAYRIAVSACKRGACRRNCKGNPNCLVGIGEQSWLGEIDENTFHNIDDPNSERRDKNTFVGLTNLGATCYVNTFLQVWFHNLELRRALYRFQNSRAEGHNTDSDYEPRTICEHLQYLFALLQNSNRRYIDPSGLVKALGLDTGQQQDAQEFSKLFLSLLEDTLSKQKDPNLQNVIQQQFCGQFSYVTVCNKCGRESPLPSRFYELELNIQGHKNLTECVTEFLKEEKLDGDNRYYCESCQSKQNATRRIKLQSLPRTLNFQLMRFVFDRQSGHKKKLNTFISFPEVLDMEPFLEGREEKCTYELSAVLIHRGVSAYSGHYIAHVRDAHTNDWYKFNDEEIEKMEGKKLQLGIEEDIAETAKSQTRKPKCSKGYHCSRNAYMLVYKQQTEEINQTESPVDVPAFLQKLVEQDNRKFEEWCSEMSDMRKQSVDKGKAKHEEVKELYELLPAEDGQSYEFVPLEWLKKWLDDSTAIKEIDNSQFLCTHGKLHPDKIGEAKRISLKAADLLFSRYGGGPRLDRSSLCRDCVTQRCRVIRLKNQLNEDYREVTNLAKSALKSEESGFWIGKASLRSWRQLALDQLEEDEEETKHNNSKINGEKSSPGTKADGVKGDSEDGDGEEMKNFNEDILCYHGGLSILENDRRLVSAEVWNKLRMYFPKAPEFTQDHDPCQQCMRLEREGKENEALNRMMANEQKSSLLNLFQEKNRPTLQKWPQDTDILYIVPLYFVEEWKKFIRRPAKGNPVSNVGNSILLCPHGGFMFTYDSMLQGDAQHIALLWPAEWEVISKMFLVDQVISICRIHDKTQDNGNVQYQTHPDLCRECREGFIFQQQRDMREYTQATVYVRKVIDKKRMIKESAPEFSVSGSDVEDEKEEPKLDGEKDPDFSQTEGGAKRQKLNDTVSLPTAVVTTTSKSGIRRSTRHRKLRGEKALIVSANQTLKDLKIQIMHAFSVAPFDQNLSIDGRCLKDDSATLGSLGVIPESIICLKADEPIADYAAMDDVYQVCMPEEGFKGTGLLGH</sequence>
<name>UBP48_DANRE</name>
<protein>
    <recommendedName>
        <fullName evidence="1">Ubiquitin carboxyl-terminal hydrolase 48</fullName>
        <ecNumber evidence="1">3.4.19.12</ecNumber>
    </recommendedName>
    <alternativeName>
        <fullName>Ubiquitin specific peptidase 48</fullName>
    </alternativeName>
</protein>
<dbReference type="EC" id="3.4.19.12" evidence="1"/>
<dbReference type="EMBL" id="CU928222">
    <property type="status" value="NOT_ANNOTATED_CDS"/>
    <property type="molecule type" value="Genomic_DNA"/>
</dbReference>
<dbReference type="RefSeq" id="NP_001411018.1">
    <property type="nucleotide sequence ID" value="NM_001424089.1"/>
</dbReference>
<dbReference type="RefSeq" id="XP_005172973.1">
    <property type="nucleotide sequence ID" value="XM_005172916.3"/>
</dbReference>
<dbReference type="RefSeq" id="XP_068080197.1">
    <property type="nucleotide sequence ID" value="XM_068224096.1"/>
</dbReference>
<dbReference type="RefSeq" id="XP_068080198.1">
    <property type="nucleotide sequence ID" value="XM_068224097.1"/>
</dbReference>
<dbReference type="RefSeq" id="XP_068080199.1">
    <property type="nucleotide sequence ID" value="XM_068224098.1"/>
</dbReference>
<dbReference type="SMR" id="A0A0R4IB93"/>
<dbReference type="FunCoup" id="A0A0R4IB93">
    <property type="interactions" value="1878"/>
</dbReference>
<dbReference type="Ensembl" id="ENSDART00000165203">
    <property type="protein sequence ID" value="ENSDARP00000130019"/>
    <property type="gene ID" value="ENSDARG00000090301"/>
</dbReference>
<dbReference type="GeneID" id="100332674"/>
<dbReference type="eggNOG" id="KOG1863">
    <property type="taxonomic scope" value="Eukaryota"/>
</dbReference>
<dbReference type="OrthoDB" id="289038at2759"/>
<dbReference type="PRO" id="PR:A0A0R4IB93"/>
<dbReference type="Proteomes" id="UP000000437">
    <property type="component" value="Chromosome 11"/>
</dbReference>
<dbReference type="Bgee" id="ENSDARG00000090301">
    <property type="expression patterns" value="Expressed in testis and 26 other cell types or tissues"/>
</dbReference>
<dbReference type="ExpressionAtlas" id="A0A0R4IB93">
    <property type="expression patterns" value="baseline"/>
</dbReference>
<dbReference type="GO" id="GO:0005829">
    <property type="term" value="C:cytosol"/>
    <property type="evidence" value="ECO:0000318"/>
    <property type="project" value="GO_Central"/>
</dbReference>
<dbReference type="GO" id="GO:0005634">
    <property type="term" value="C:nucleus"/>
    <property type="evidence" value="ECO:0000318"/>
    <property type="project" value="GO_Central"/>
</dbReference>
<dbReference type="GO" id="GO:0004843">
    <property type="term" value="F:cysteine-type deubiquitinase activity"/>
    <property type="evidence" value="ECO:0000318"/>
    <property type="project" value="GO_Central"/>
</dbReference>
<dbReference type="GO" id="GO:0004197">
    <property type="term" value="F:cysteine-type endopeptidase activity"/>
    <property type="evidence" value="ECO:0007669"/>
    <property type="project" value="InterPro"/>
</dbReference>
<dbReference type="GO" id="GO:1904888">
    <property type="term" value="P:cranial skeletal system development"/>
    <property type="evidence" value="ECO:0000315"/>
    <property type="project" value="ZFIN"/>
</dbReference>
<dbReference type="GO" id="GO:0016579">
    <property type="term" value="P:protein deubiquitination"/>
    <property type="evidence" value="ECO:0007669"/>
    <property type="project" value="InterPro"/>
</dbReference>
<dbReference type="GO" id="GO:0006508">
    <property type="term" value="P:proteolysis"/>
    <property type="evidence" value="ECO:0007669"/>
    <property type="project" value="UniProtKB-KW"/>
</dbReference>
<dbReference type="GO" id="GO:0031647">
    <property type="term" value="P:regulation of protein stability"/>
    <property type="evidence" value="ECO:0000318"/>
    <property type="project" value="GO_Central"/>
</dbReference>
<dbReference type="CDD" id="cd02668">
    <property type="entry name" value="Peptidase_C19L"/>
    <property type="match status" value="1"/>
</dbReference>
<dbReference type="CDD" id="cd01795">
    <property type="entry name" value="Ubl_USP48"/>
    <property type="match status" value="1"/>
</dbReference>
<dbReference type="FunFam" id="3.90.70.10:FF:000029">
    <property type="entry name" value="ubiquitin carboxyl-terminal hydrolase 48 isoform X1"/>
    <property type="match status" value="1"/>
</dbReference>
<dbReference type="Gene3D" id="3.90.70.10">
    <property type="entry name" value="Cysteine proteinases"/>
    <property type="match status" value="1"/>
</dbReference>
<dbReference type="Gene3D" id="3.30.2230.10">
    <property type="entry name" value="DUSP-like"/>
    <property type="match status" value="1"/>
</dbReference>
<dbReference type="Gene3D" id="3.10.20.90">
    <property type="entry name" value="Phosphatidylinositol 3-kinase Catalytic Subunit, Chain A, domain 1"/>
    <property type="match status" value="1"/>
</dbReference>
<dbReference type="InterPro" id="IPR035927">
    <property type="entry name" value="DUSP-like_sf"/>
</dbReference>
<dbReference type="InterPro" id="IPR038765">
    <property type="entry name" value="Papain-like_cys_pep_sf"/>
</dbReference>
<dbReference type="InterPro" id="IPR006615">
    <property type="entry name" value="Pept_C19_DUSP"/>
</dbReference>
<dbReference type="InterPro" id="IPR050164">
    <property type="entry name" value="Peptidase_C19"/>
</dbReference>
<dbReference type="InterPro" id="IPR001394">
    <property type="entry name" value="Peptidase_C19_UCH"/>
</dbReference>
<dbReference type="InterPro" id="IPR000626">
    <property type="entry name" value="Ubiquitin-like_dom"/>
</dbReference>
<dbReference type="InterPro" id="IPR029071">
    <property type="entry name" value="Ubiquitin-like_domsf"/>
</dbReference>
<dbReference type="InterPro" id="IPR044743">
    <property type="entry name" value="Ubl_USP48"/>
</dbReference>
<dbReference type="InterPro" id="IPR033841">
    <property type="entry name" value="USP48"/>
</dbReference>
<dbReference type="InterPro" id="IPR018200">
    <property type="entry name" value="USP_CS"/>
</dbReference>
<dbReference type="InterPro" id="IPR028889">
    <property type="entry name" value="USP_dom"/>
</dbReference>
<dbReference type="PANTHER" id="PTHR24006">
    <property type="entry name" value="UBIQUITIN CARBOXYL-TERMINAL HYDROLASE"/>
    <property type="match status" value="1"/>
</dbReference>
<dbReference type="PANTHER" id="PTHR24006:SF722">
    <property type="entry name" value="UBIQUITIN CARBOXYL-TERMINAL HYDROLASE 48"/>
    <property type="match status" value="1"/>
</dbReference>
<dbReference type="Pfam" id="PF06337">
    <property type="entry name" value="DUSP"/>
    <property type="match status" value="1"/>
</dbReference>
<dbReference type="Pfam" id="PF00443">
    <property type="entry name" value="UCH"/>
    <property type="match status" value="1"/>
</dbReference>
<dbReference type="SUPFAM" id="SSF54001">
    <property type="entry name" value="Cysteine proteinases"/>
    <property type="match status" value="1"/>
</dbReference>
<dbReference type="SUPFAM" id="SSF143791">
    <property type="entry name" value="DUSP-like"/>
    <property type="match status" value="1"/>
</dbReference>
<dbReference type="SUPFAM" id="SSF54236">
    <property type="entry name" value="Ubiquitin-like"/>
    <property type="match status" value="1"/>
</dbReference>
<dbReference type="PROSITE" id="PS51283">
    <property type="entry name" value="DUSP"/>
    <property type="match status" value="1"/>
</dbReference>
<dbReference type="PROSITE" id="PS50053">
    <property type="entry name" value="UBIQUITIN_2"/>
    <property type="match status" value="1"/>
</dbReference>
<dbReference type="PROSITE" id="PS00973">
    <property type="entry name" value="USP_2"/>
    <property type="match status" value="1"/>
</dbReference>
<dbReference type="PROSITE" id="PS50235">
    <property type="entry name" value="USP_3"/>
    <property type="match status" value="1"/>
</dbReference>